<feature type="chain" id="PRO_0000169372" description="Uncharacterized protein YggN">
    <location>
        <begin position="1"/>
        <end position="239"/>
    </location>
</feature>
<keyword id="KW-1185">Reference proteome</keyword>
<protein>
    <recommendedName>
        <fullName>Uncharacterized protein YggN</fullName>
    </recommendedName>
</protein>
<dbReference type="EMBL" id="AE005174">
    <property type="protein sequence ID" value="AAG58089.1"/>
    <property type="molecule type" value="Genomic_DNA"/>
</dbReference>
<dbReference type="EMBL" id="BA000007">
    <property type="protein sequence ID" value="BAB37257.1"/>
    <property type="molecule type" value="Genomic_DNA"/>
</dbReference>
<dbReference type="PIR" id="B91108">
    <property type="entry name" value="B91108"/>
</dbReference>
<dbReference type="RefSeq" id="NP_311861.1">
    <property type="nucleotide sequence ID" value="NC_002695.1"/>
</dbReference>
<dbReference type="RefSeq" id="WP_000984796.1">
    <property type="nucleotide sequence ID" value="NZ_VOAI01000003.1"/>
</dbReference>
<dbReference type="SMR" id="P0ADT1"/>
<dbReference type="STRING" id="155864.Z4303"/>
<dbReference type="GeneID" id="916337"/>
<dbReference type="KEGG" id="ece:Z4303"/>
<dbReference type="KEGG" id="ecs:ECs_3834"/>
<dbReference type="PATRIC" id="fig|386585.9.peg.4000"/>
<dbReference type="eggNOG" id="ENOG502Z7J1">
    <property type="taxonomic scope" value="Bacteria"/>
</dbReference>
<dbReference type="HOGENOM" id="CLU_1159649_0_0_6"/>
<dbReference type="OMA" id="PLQAMMG"/>
<dbReference type="Proteomes" id="UP000000558">
    <property type="component" value="Chromosome"/>
</dbReference>
<dbReference type="Proteomes" id="UP000002519">
    <property type="component" value="Chromosome"/>
</dbReference>
<dbReference type="InterPro" id="IPR021307">
    <property type="entry name" value="DUF2884"/>
</dbReference>
<dbReference type="NCBIfam" id="NF007913">
    <property type="entry name" value="PRK10626.1"/>
    <property type="match status" value="1"/>
</dbReference>
<dbReference type="Pfam" id="PF11101">
    <property type="entry name" value="DUF2884"/>
    <property type="match status" value="1"/>
</dbReference>
<sequence>MMRKMLLAAALSVTAMTAHADYQCSVTPRDDVIVSPQTVQVKGENGNLVITPDGNVMYNGKQYSLNAAQREQAKDYQAELRSTLPWIDEGAKSRVEKARIALDKIIVQEMGESSKMRSRLTKLDAQLKEQMNRIIETRSDGLTFHYKAIDQVRAEGQQLVNQAMGGILQDSINEMGAKAVLKSGGNPLQNVLGSLGGLQSSIQTEWKKQEKDFQQFGKDVCSRVVTLEDSRKALVGNLK</sequence>
<organism>
    <name type="scientific">Escherichia coli O157:H7</name>
    <dbReference type="NCBI Taxonomy" id="83334"/>
    <lineage>
        <taxon>Bacteria</taxon>
        <taxon>Pseudomonadati</taxon>
        <taxon>Pseudomonadota</taxon>
        <taxon>Gammaproteobacteria</taxon>
        <taxon>Enterobacterales</taxon>
        <taxon>Enterobacteriaceae</taxon>
        <taxon>Escherichia</taxon>
    </lineage>
</organism>
<reference key="1">
    <citation type="journal article" date="2001" name="Nature">
        <title>Genome sequence of enterohaemorrhagic Escherichia coli O157:H7.</title>
        <authorList>
            <person name="Perna N.T."/>
            <person name="Plunkett G. III"/>
            <person name="Burland V."/>
            <person name="Mau B."/>
            <person name="Glasner J.D."/>
            <person name="Rose D.J."/>
            <person name="Mayhew G.F."/>
            <person name="Evans P.S."/>
            <person name="Gregor J."/>
            <person name="Kirkpatrick H.A."/>
            <person name="Posfai G."/>
            <person name="Hackett J."/>
            <person name="Klink S."/>
            <person name="Boutin A."/>
            <person name="Shao Y."/>
            <person name="Miller L."/>
            <person name="Grotbeck E.J."/>
            <person name="Davis N.W."/>
            <person name="Lim A."/>
            <person name="Dimalanta E.T."/>
            <person name="Potamousis K."/>
            <person name="Apodaca J."/>
            <person name="Anantharaman T.S."/>
            <person name="Lin J."/>
            <person name="Yen G."/>
            <person name="Schwartz D.C."/>
            <person name="Welch R.A."/>
            <person name="Blattner F.R."/>
        </authorList>
    </citation>
    <scope>NUCLEOTIDE SEQUENCE [LARGE SCALE GENOMIC DNA]</scope>
    <source>
        <strain>O157:H7 / EDL933 / ATCC 700927 / EHEC</strain>
    </source>
</reference>
<reference key="2">
    <citation type="journal article" date="2001" name="DNA Res.">
        <title>Complete genome sequence of enterohemorrhagic Escherichia coli O157:H7 and genomic comparison with a laboratory strain K-12.</title>
        <authorList>
            <person name="Hayashi T."/>
            <person name="Makino K."/>
            <person name="Ohnishi M."/>
            <person name="Kurokawa K."/>
            <person name="Ishii K."/>
            <person name="Yokoyama K."/>
            <person name="Han C.-G."/>
            <person name="Ohtsubo E."/>
            <person name="Nakayama K."/>
            <person name="Murata T."/>
            <person name="Tanaka M."/>
            <person name="Tobe T."/>
            <person name="Iida T."/>
            <person name="Takami H."/>
            <person name="Honda T."/>
            <person name="Sasakawa C."/>
            <person name="Ogasawara N."/>
            <person name="Yasunaga T."/>
            <person name="Kuhara S."/>
            <person name="Shiba T."/>
            <person name="Hattori M."/>
            <person name="Shinagawa H."/>
        </authorList>
    </citation>
    <scope>NUCLEOTIDE SEQUENCE [LARGE SCALE GENOMIC DNA]</scope>
    <source>
        <strain>O157:H7 / Sakai / RIMD 0509952 / EHEC</strain>
    </source>
</reference>
<name>YGGN_ECO57</name>
<gene>
    <name type="primary">yggN</name>
    <name type="ordered locus">Z4303</name>
    <name type="ordered locus">ECs3834</name>
</gene>
<accession>P0ADT1</accession>
<accession>P46143</accession>
<proteinExistence type="predicted"/>